<feature type="chain" id="PRO_1000123282" description="Phosphopantetheine adenylyltransferase">
    <location>
        <begin position="1"/>
        <end position="163"/>
    </location>
</feature>
<feature type="binding site" evidence="1">
    <location>
        <begin position="9"/>
        <end position="10"/>
    </location>
    <ligand>
        <name>ATP</name>
        <dbReference type="ChEBI" id="CHEBI:30616"/>
    </ligand>
</feature>
<feature type="binding site" evidence="1">
    <location>
        <position position="9"/>
    </location>
    <ligand>
        <name>substrate</name>
    </ligand>
</feature>
<feature type="binding site" evidence="1">
    <location>
        <position position="17"/>
    </location>
    <ligand>
        <name>ATP</name>
        <dbReference type="ChEBI" id="CHEBI:30616"/>
    </ligand>
</feature>
<feature type="binding site" evidence="1">
    <location>
        <position position="41"/>
    </location>
    <ligand>
        <name>substrate</name>
    </ligand>
</feature>
<feature type="binding site" evidence="1">
    <location>
        <position position="73"/>
    </location>
    <ligand>
        <name>substrate</name>
    </ligand>
</feature>
<feature type="binding site" evidence="1">
    <location>
        <position position="87"/>
    </location>
    <ligand>
        <name>substrate</name>
    </ligand>
</feature>
<feature type="binding site" evidence="1">
    <location>
        <begin position="88"/>
        <end position="90"/>
    </location>
    <ligand>
        <name>ATP</name>
        <dbReference type="ChEBI" id="CHEBI:30616"/>
    </ligand>
</feature>
<feature type="binding site" evidence="1">
    <location>
        <position position="98"/>
    </location>
    <ligand>
        <name>ATP</name>
        <dbReference type="ChEBI" id="CHEBI:30616"/>
    </ligand>
</feature>
<feature type="binding site" evidence="1">
    <location>
        <begin position="123"/>
        <end position="129"/>
    </location>
    <ligand>
        <name>ATP</name>
        <dbReference type="ChEBI" id="CHEBI:30616"/>
    </ligand>
</feature>
<feature type="site" description="Transition state stabilizer" evidence="1">
    <location>
        <position position="17"/>
    </location>
</feature>
<keyword id="KW-0067">ATP-binding</keyword>
<keyword id="KW-0173">Coenzyme A biosynthesis</keyword>
<keyword id="KW-0963">Cytoplasm</keyword>
<keyword id="KW-0460">Magnesium</keyword>
<keyword id="KW-0547">Nucleotide-binding</keyword>
<keyword id="KW-0548">Nucleotidyltransferase</keyword>
<keyword id="KW-0808">Transferase</keyword>
<reference key="1">
    <citation type="journal article" date="2012" name="BMC Microbiol.">
        <title>Genome sequence of Desulfitobacterium hafniense DCB-2, a Gram-positive anaerobe capable of dehalogenation and metal reduction.</title>
        <authorList>
            <person name="Kim S.H."/>
            <person name="Harzman C."/>
            <person name="Davis J.K."/>
            <person name="Hutcheson R."/>
            <person name="Broderick J.B."/>
            <person name="Marsh T.L."/>
            <person name="Tiedje J.M."/>
        </authorList>
    </citation>
    <scope>NUCLEOTIDE SEQUENCE [LARGE SCALE GENOMIC DNA]</scope>
    <source>
        <strain>DSM 10664 / DCB-2</strain>
    </source>
</reference>
<accession>B8FTK5</accession>
<name>COAD_DESHD</name>
<proteinExistence type="inferred from homology"/>
<evidence type="ECO:0000255" key="1">
    <source>
        <dbReference type="HAMAP-Rule" id="MF_00151"/>
    </source>
</evidence>
<dbReference type="EC" id="2.7.7.3" evidence="1"/>
<dbReference type="EMBL" id="CP001336">
    <property type="protein sequence ID" value="ACL20439.1"/>
    <property type="molecule type" value="Genomic_DNA"/>
</dbReference>
<dbReference type="RefSeq" id="WP_015944013.1">
    <property type="nucleotide sequence ID" value="NC_011830.1"/>
</dbReference>
<dbReference type="SMR" id="B8FTK5"/>
<dbReference type="KEGG" id="dhd:Dhaf_2411"/>
<dbReference type="HOGENOM" id="CLU_100149_0_1_9"/>
<dbReference type="UniPathway" id="UPA00241">
    <property type="reaction ID" value="UER00355"/>
</dbReference>
<dbReference type="Proteomes" id="UP000007726">
    <property type="component" value="Chromosome"/>
</dbReference>
<dbReference type="GO" id="GO:0005737">
    <property type="term" value="C:cytoplasm"/>
    <property type="evidence" value="ECO:0007669"/>
    <property type="project" value="UniProtKB-SubCell"/>
</dbReference>
<dbReference type="GO" id="GO:0005524">
    <property type="term" value="F:ATP binding"/>
    <property type="evidence" value="ECO:0007669"/>
    <property type="project" value="UniProtKB-KW"/>
</dbReference>
<dbReference type="GO" id="GO:0004595">
    <property type="term" value="F:pantetheine-phosphate adenylyltransferase activity"/>
    <property type="evidence" value="ECO:0007669"/>
    <property type="project" value="UniProtKB-UniRule"/>
</dbReference>
<dbReference type="GO" id="GO:0015937">
    <property type="term" value="P:coenzyme A biosynthetic process"/>
    <property type="evidence" value="ECO:0007669"/>
    <property type="project" value="UniProtKB-UniRule"/>
</dbReference>
<dbReference type="CDD" id="cd02163">
    <property type="entry name" value="PPAT"/>
    <property type="match status" value="1"/>
</dbReference>
<dbReference type="Gene3D" id="3.40.50.620">
    <property type="entry name" value="HUPs"/>
    <property type="match status" value="1"/>
</dbReference>
<dbReference type="HAMAP" id="MF_00151">
    <property type="entry name" value="PPAT_bact"/>
    <property type="match status" value="1"/>
</dbReference>
<dbReference type="InterPro" id="IPR004821">
    <property type="entry name" value="Cyt_trans-like"/>
</dbReference>
<dbReference type="InterPro" id="IPR001980">
    <property type="entry name" value="PPAT"/>
</dbReference>
<dbReference type="InterPro" id="IPR014729">
    <property type="entry name" value="Rossmann-like_a/b/a_fold"/>
</dbReference>
<dbReference type="NCBIfam" id="TIGR01510">
    <property type="entry name" value="coaD_prev_kdtB"/>
    <property type="match status" value="1"/>
</dbReference>
<dbReference type="NCBIfam" id="TIGR00125">
    <property type="entry name" value="cyt_tran_rel"/>
    <property type="match status" value="1"/>
</dbReference>
<dbReference type="PANTHER" id="PTHR21342">
    <property type="entry name" value="PHOSPHOPANTETHEINE ADENYLYLTRANSFERASE"/>
    <property type="match status" value="1"/>
</dbReference>
<dbReference type="PANTHER" id="PTHR21342:SF1">
    <property type="entry name" value="PHOSPHOPANTETHEINE ADENYLYLTRANSFERASE"/>
    <property type="match status" value="1"/>
</dbReference>
<dbReference type="Pfam" id="PF01467">
    <property type="entry name" value="CTP_transf_like"/>
    <property type="match status" value="1"/>
</dbReference>
<dbReference type="PRINTS" id="PR01020">
    <property type="entry name" value="LPSBIOSNTHSS"/>
</dbReference>
<dbReference type="SUPFAM" id="SSF52374">
    <property type="entry name" value="Nucleotidylyl transferase"/>
    <property type="match status" value="1"/>
</dbReference>
<organism>
    <name type="scientific">Desulfitobacterium hafniense (strain DSM 10664 / DCB-2)</name>
    <dbReference type="NCBI Taxonomy" id="272564"/>
    <lineage>
        <taxon>Bacteria</taxon>
        <taxon>Bacillati</taxon>
        <taxon>Bacillota</taxon>
        <taxon>Clostridia</taxon>
        <taxon>Eubacteriales</taxon>
        <taxon>Desulfitobacteriaceae</taxon>
        <taxon>Desulfitobacterium</taxon>
    </lineage>
</organism>
<protein>
    <recommendedName>
        <fullName evidence="1">Phosphopantetheine adenylyltransferase</fullName>
        <ecNumber evidence="1">2.7.7.3</ecNumber>
    </recommendedName>
    <alternativeName>
        <fullName evidence="1">Dephospho-CoA pyrophosphorylase</fullName>
    </alternativeName>
    <alternativeName>
        <fullName evidence="1">Pantetheine-phosphate adenylyltransferase</fullName>
        <shortName evidence="1">PPAT</shortName>
    </alternativeName>
</protein>
<sequence>MRIAIYPGTFDPVTNGHLDILKRATEFFDEVIVAVAVDSNKTTLFSLEERIQLLETAAEELSQVKIRGFEGLTVEFARQCGANAIIRGLRAMQDFEYEFQLALMNKKLAADIETIFLMTQSEFSFISSSSIKWAASLKGNISEFVPPHVERAIYRKYHPEIDD</sequence>
<comment type="function">
    <text evidence="1">Reversibly transfers an adenylyl group from ATP to 4'-phosphopantetheine, yielding dephospho-CoA (dPCoA) and pyrophosphate.</text>
</comment>
<comment type="catalytic activity">
    <reaction evidence="1">
        <text>(R)-4'-phosphopantetheine + ATP + H(+) = 3'-dephospho-CoA + diphosphate</text>
        <dbReference type="Rhea" id="RHEA:19801"/>
        <dbReference type="ChEBI" id="CHEBI:15378"/>
        <dbReference type="ChEBI" id="CHEBI:30616"/>
        <dbReference type="ChEBI" id="CHEBI:33019"/>
        <dbReference type="ChEBI" id="CHEBI:57328"/>
        <dbReference type="ChEBI" id="CHEBI:61723"/>
        <dbReference type="EC" id="2.7.7.3"/>
    </reaction>
</comment>
<comment type="cofactor">
    <cofactor evidence="1">
        <name>Mg(2+)</name>
        <dbReference type="ChEBI" id="CHEBI:18420"/>
    </cofactor>
</comment>
<comment type="pathway">
    <text evidence="1">Cofactor biosynthesis; coenzyme A biosynthesis; CoA from (R)-pantothenate: step 4/5.</text>
</comment>
<comment type="subunit">
    <text evidence="1">Homohexamer.</text>
</comment>
<comment type="subcellular location">
    <subcellularLocation>
        <location evidence="1">Cytoplasm</location>
    </subcellularLocation>
</comment>
<comment type="similarity">
    <text evidence="1">Belongs to the bacterial CoaD family.</text>
</comment>
<gene>
    <name evidence="1" type="primary">coaD</name>
    <name type="ordered locus">Dhaf_2411</name>
</gene>